<keyword id="KW-0002">3D-structure</keyword>
<keyword id="KW-0007">Acetylation</keyword>
<keyword id="KW-0025">Alternative splicing</keyword>
<keyword id="KW-0963">Cytoplasm</keyword>
<keyword id="KW-0903">Direct protein sequencing</keyword>
<keyword id="KW-0945">Host-virus interaction</keyword>
<keyword id="KW-0396">Initiation factor</keyword>
<keyword id="KW-0597">Phosphoprotein</keyword>
<keyword id="KW-0648">Protein biosynthesis</keyword>
<keyword id="KW-1267">Proteomics identification</keyword>
<keyword id="KW-1185">Reference proteome</keyword>
<gene>
    <name evidence="1" type="primary">EIF3M</name>
    <name type="synonym">HFLB5</name>
    <name type="synonym">PCID1</name>
    <name type="ORF">GA17</name>
    <name type="ORF">PNAS-125</name>
</gene>
<feature type="initiator methionine" description="Removed" evidence="1 8 15 18 20 21">
    <location>
        <position position="1"/>
    </location>
</feature>
<feature type="chain" id="PRO_0000308195" description="Eukaryotic translation initiation factor 3 subunit M">
    <location>
        <begin position="2"/>
        <end position="374"/>
    </location>
</feature>
<feature type="domain" description="PCI" evidence="2">
    <location>
        <begin position="180"/>
        <end position="339"/>
    </location>
</feature>
<feature type="region of interest" description="Interaction with HSV-1 and HSV-2">
    <location>
        <begin position="344"/>
        <end position="374"/>
    </location>
</feature>
<feature type="modified residue" description="N-acetylserine" evidence="1 8 15 18 20 21">
    <location>
        <position position="2"/>
    </location>
</feature>
<feature type="modified residue" description="Phosphoserine" evidence="20 22">
    <location>
        <position position="2"/>
    </location>
</feature>
<feature type="modified residue" description="Phosphoserine" evidence="22">
    <location>
        <position position="152"/>
    </location>
</feature>
<feature type="modified residue" description="N6-acetyllysine" evidence="19">
    <location>
        <position position="254"/>
    </location>
</feature>
<feature type="modified residue" description="Phosphoserine" evidence="22">
    <location>
        <position position="367"/>
    </location>
</feature>
<feature type="splice variant" id="VSP_056911" description="In isoform 2." evidence="16">
    <location>
        <begin position="13"/>
        <end position="144"/>
    </location>
</feature>
<feature type="sequence variant" id="VAR_036752" description="In dbSNP:rs11557143.">
    <original>G</original>
    <variation>R</variation>
    <location>
        <position position="37"/>
    </location>
</feature>
<feature type="sequence variant" id="VAR_036753" description="In a breast cancer sample; somatic mutation." evidence="7">
    <original>E</original>
    <variation>G</variation>
    <location>
        <position position="80"/>
    </location>
</feature>
<feature type="sequence variant" id="VAR_036754" description="In dbSNP:rs1802363." evidence="14">
    <original>Q</original>
    <variation>R</variation>
    <location>
        <position position="346"/>
    </location>
</feature>
<feature type="mutagenesis site" description="Reduces HSV binding and entry." evidence="5">
    <original>L</original>
    <variation>P</variation>
    <location>
        <position position="350"/>
    </location>
</feature>
<feature type="mutagenesis site" description="Reduces HSV binding and entry." evidence="5">
    <original>L</original>
    <variation>P</variation>
    <location>
        <position position="354"/>
    </location>
</feature>
<feature type="mutagenesis site" description="Reduces HSV binding and entry." evidence="5">
    <original>L</original>
    <variation>P</variation>
    <location>
        <position position="361"/>
    </location>
</feature>
<feature type="mutagenesis site" description="Reduces HSV binding and entry." evidence="5">
    <original>V</original>
    <variation>P</variation>
    <location>
        <position position="364"/>
    </location>
</feature>
<feature type="sequence conflict" description="In Ref. 2; AAC17108." evidence="17" ref="2">
    <original>M</original>
    <variation>V</variation>
    <location>
        <position position="64"/>
    </location>
</feature>
<feature type="sequence conflict" description="In Ref. 10; ABD14422." evidence="17" ref="10">
    <original>Y</original>
    <variation>C</variation>
    <location>
        <position position="121"/>
    </location>
</feature>
<feature type="sequence conflict" description="In Ref. 2; AAC17108." evidence="17" ref="2">
    <original>KVA</original>
    <variation>EVV</variation>
    <location>
        <begin position="129"/>
        <end position="131"/>
    </location>
</feature>
<feature type="sequence conflict" description="In Ref. 2; AAC17108." evidence="17" ref="2">
    <original>V</original>
    <variation>A</variation>
    <location>
        <position position="173"/>
    </location>
</feature>
<feature type="sequence conflict" description="In Ref. 2; AAC17108." evidence="17" ref="2">
    <original>RA</original>
    <variation>EP</variation>
    <location>
        <begin position="210"/>
        <end position="211"/>
    </location>
</feature>
<feature type="sequence conflict" description="In Ref. 2; AAC17108." evidence="17" ref="2">
    <original>V</original>
    <variation>I</variation>
    <location>
        <position position="287"/>
    </location>
</feature>
<feature type="sequence conflict" description="In Ref. 5; BAD96284." evidence="17" ref="5">
    <original>M</original>
    <variation>V</variation>
    <location>
        <position position="297"/>
    </location>
</feature>
<feature type="strand" evidence="23">
    <location>
        <begin position="10"/>
        <end position="14"/>
    </location>
</feature>
<feature type="helix" evidence="23">
    <location>
        <begin position="18"/>
        <end position="24"/>
    </location>
</feature>
<feature type="helix" evidence="23">
    <location>
        <begin position="31"/>
        <end position="34"/>
    </location>
</feature>
<feature type="turn" evidence="23">
    <location>
        <begin position="35"/>
        <end position="38"/>
    </location>
</feature>
<feature type="strand" evidence="23">
    <location>
        <begin position="39"/>
        <end position="41"/>
    </location>
</feature>
<feature type="strand" evidence="23">
    <location>
        <begin position="44"/>
        <end position="50"/>
    </location>
</feature>
<feature type="turn" evidence="23">
    <location>
        <begin position="51"/>
        <end position="53"/>
    </location>
</feature>
<feature type="turn" evidence="23">
    <location>
        <begin position="61"/>
        <end position="63"/>
    </location>
</feature>
<feature type="helix" evidence="23">
    <location>
        <begin position="64"/>
        <end position="67"/>
    </location>
</feature>
<feature type="turn" evidence="23">
    <location>
        <begin position="68"/>
        <end position="71"/>
    </location>
</feature>
<feature type="turn" evidence="23">
    <location>
        <begin position="74"/>
        <end position="76"/>
    </location>
</feature>
<feature type="strand" evidence="23">
    <location>
        <begin position="80"/>
        <end position="87"/>
    </location>
</feature>
<feature type="helix" evidence="23">
    <location>
        <begin position="88"/>
        <end position="91"/>
    </location>
</feature>
<feature type="turn" evidence="23">
    <location>
        <begin position="92"/>
        <end position="94"/>
    </location>
</feature>
<feature type="helix" evidence="23">
    <location>
        <begin position="99"/>
        <end position="105"/>
    </location>
</feature>
<feature type="helix" evidence="23">
    <location>
        <begin position="106"/>
        <end position="108"/>
    </location>
</feature>
<feature type="strand" evidence="23">
    <location>
        <begin position="111"/>
        <end position="114"/>
    </location>
</feature>
<feature type="helix" evidence="23">
    <location>
        <begin position="117"/>
        <end position="127"/>
    </location>
</feature>
<feature type="turn" evidence="23">
    <location>
        <begin position="128"/>
        <end position="130"/>
    </location>
</feature>
<feature type="strand" evidence="23">
    <location>
        <begin position="133"/>
        <end position="135"/>
    </location>
</feature>
<feature type="turn" evidence="23">
    <location>
        <begin position="136"/>
        <end position="139"/>
    </location>
</feature>
<feature type="turn" evidence="23">
    <location>
        <begin position="142"/>
        <end position="144"/>
    </location>
</feature>
<feature type="strand" evidence="23">
    <location>
        <begin position="149"/>
        <end position="152"/>
    </location>
</feature>
<feature type="helix" evidence="23">
    <location>
        <begin position="155"/>
        <end position="167"/>
    </location>
</feature>
<feature type="turn" evidence="23">
    <location>
        <begin position="168"/>
        <end position="171"/>
    </location>
</feature>
<feature type="helix" evidence="23">
    <location>
        <begin position="175"/>
        <end position="192"/>
    </location>
</feature>
<feature type="helix" evidence="23">
    <location>
        <begin position="199"/>
        <end position="211"/>
    </location>
</feature>
<feature type="strand" evidence="23">
    <location>
        <begin position="220"/>
        <end position="223"/>
    </location>
</feature>
<feature type="turn" evidence="23">
    <location>
        <begin position="228"/>
        <end position="230"/>
    </location>
</feature>
<feature type="turn" evidence="23">
    <location>
        <begin position="234"/>
        <end position="238"/>
    </location>
</feature>
<feature type="turn" evidence="23">
    <location>
        <begin position="240"/>
        <end position="242"/>
    </location>
</feature>
<feature type="helix" evidence="23">
    <location>
        <begin position="252"/>
        <end position="256"/>
    </location>
</feature>
<feature type="helix" evidence="23">
    <location>
        <begin position="263"/>
        <end position="266"/>
    </location>
</feature>
<feature type="helix" evidence="23">
    <location>
        <begin position="269"/>
        <end position="277"/>
    </location>
</feature>
<feature type="helix" evidence="23">
    <location>
        <begin position="281"/>
        <end position="284"/>
    </location>
</feature>
<feature type="strand" evidence="23">
    <location>
        <begin position="286"/>
        <end position="290"/>
    </location>
</feature>
<feature type="strand" evidence="24">
    <location>
        <begin position="291"/>
        <end position="293"/>
    </location>
</feature>
<feature type="turn" evidence="23">
    <location>
        <begin position="294"/>
        <end position="296"/>
    </location>
</feature>
<feature type="helix" evidence="23">
    <location>
        <begin position="297"/>
        <end position="300"/>
    </location>
</feature>
<feature type="helix" evidence="24">
    <location>
        <begin position="305"/>
        <end position="307"/>
    </location>
</feature>
<feature type="helix" evidence="23">
    <location>
        <begin position="308"/>
        <end position="317"/>
    </location>
</feature>
<feature type="strand" evidence="24">
    <location>
        <begin position="322"/>
        <end position="325"/>
    </location>
</feature>
<feature type="strand" evidence="23">
    <location>
        <begin position="326"/>
        <end position="328"/>
    </location>
</feature>
<feature type="helix" evidence="23">
    <location>
        <begin position="342"/>
        <end position="345"/>
    </location>
</feature>
<feature type="helix" evidence="23">
    <location>
        <begin position="348"/>
        <end position="354"/>
    </location>
</feature>
<protein>
    <recommendedName>
        <fullName evidence="1">Eukaryotic translation initiation factor 3 subunit M</fullName>
        <shortName evidence="1">eIF3m</shortName>
    </recommendedName>
    <alternativeName>
        <fullName>Fetal lung protein B5</fullName>
        <shortName>hFL-B5</shortName>
    </alternativeName>
    <alternativeName>
        <fullName>PCI domain-containing protein 1</fullName>
    </alternativeName>
</protein>
<organism>
    <name type="scientific">Homo sapiens</name>
    <name type="common">Human</name>
    <dbReference type="NCBI Taxonomy" id="9606"/>
    <lineage>
        <taxon>Eukaryota</taxon>
        <taxon>Metazoa</taxon>
        <taxon>Chordata</taxon>
        <taxon>Craniata</taxon>
        <taxon>Vertebrata</taxon>
        <taxon>Euteleostomi</taxon>
        <taxon>Mammalia</taxon>
        <taxon>Eutheria</taxon>
        <taxon>Euarchontoglires</taxon>
        <taxon>Primates</taxon>
        <taxon>Haplorrhini</taxon>
        <taxon>Catarrhini</taxon>
        <taxon>Hominidae</taxon>
        <taxon>Homo</taxon>
    </lineage>
</organism>
<sequence length="374" mass="42503">MSVPAFIDISEEDQAAELRAYLKSKGAEISEENSEGGLHVDLAQIIEACDVCLKEDDKDVESVMNSVVSLLLILEPDKQEALIESLCEKLVKFREGERPSLRLQLLSNLFHGMDKNTPVRYTVYCSLIKVAASCGAIQYIPTELDQVRKWISDWNLTTEKKHTLLRLLYEALVDCKKSDAASKVMVELLGSYTEDNASQARVDAHRCIVRALKDPNAFLFDHLLTLKPVKFLEGELIHDLLTIFVSAKLASYVKFYQNNKDFIDSLGLLHEQNMAKMRLLTFMGMAVENKEISFDTMQQELQIGADDVEAFVIDAVRTKMVYCKIDQTQRKVVVSHSTHRTFGKQQWQQLYDTLNAWKQNLNKVKNSLLSLSDT</sequence>
<name>EIF3M_HUMAN</name>
<proteinExistence type="evidence at protein level"/>
<dbReference type="EMBL" id="AY769947">
    <property type="protein sequence ID" value="AAX12524.1"/>
    <property type="molecule type" value="mRNA"/>
</dbReference>
<dbReference type="EMBL" id="AF064603">
    <property type="protein sequence ID" value="AAC17108.1"/>
    <property type="molecule type" value="mRNA"/>
</dbReference>
<dbReference type="EMBL" id="CR450300">
    <property type="protein sequence ID" value="CAG29296.1"/>
    <property type="molecule type" value="mRNA"/>
</dbReference>
<dbReference type="EMBL" id="AK292139">
    <property type="protein sequence ID" value="BAF84828.1"/>
    <property type="molecule type" value="mRNA"/>
</dbReference>
<dbReference type="EMBL" id="AK304378">
    <property type="protein sequence ID" value="BAG65216.1"/>
    <property type="molecule type" value="mRNA"/>
</dbReference>
<dbReference type="EMBL" id="AK312512">
    <property type="protein sequence ID" value="BAG35413.1"/>
    <property type="molecule type" value="mRNA"/>
</dbReference>
<dbReference type="EMBL" id="AK222564">
    <property type="protein sequence ID" value="BAD96284.1"/>
    <property type="molecule type" value="mRNA"/>
</dbReference>
<dbReference type="EMBL" id="AL078477">
    <property type="status" value="NOT_ANNOTATED_CDS"/>
    <property type="molecule type" value="Genomic_DNA"/>
</dbReference>
<dbReference type="EMBL" id="CH471064">
    <property type="protein sequence ID" value="EAW68217.1"/>
    <property type="molecule type" value="Genomic_DNA"/>
</dbReference>
<dbReference type="EMBL" id="BC019103">
    <property type="protein sequence ID" value="AAH19103.1"/>
    <property type="molecule type" value="mRNA"/>
</dbReference>
<dbReference type="EMBL" id="BC051292">
    <property type="protein sequence ID" value="AAH51292.1"/>
    <property type="molecule type" value="mRNA"/>
</dbReference>
<dbReference type="EMBL" id="DQ185042">
    <property type="protein sequence ID" value="ABD14422.1"/>
    <property type="molecule type" value="mRNA"/>
</dbReference>
<dbReference type="EMBL" id="AF277183">
    <property type="protein sequence ID" value="AAK07542.1"/>
    <property type="status" value="ALT_SEQ"/>
    <property type="molecule type" value="mRNA"/>
</dbReference>
<dbReference type="CCDS" id="CCDS76392.1">
    <molecule id="Q7L2H7-2"/>
</dbReference>
<dbReference type="CCDS" id="CCDS7880.1">
    <molecule id="Q7L2H7-1"/>
</dbReference>
<dbReference type="RefSeq" id="NP_001294858.1">
    <molecule id="Q7L2H7-2"/>
    <property type="nucleotide sequence ID" value="NM_001307929.2"/>
</dbReference>
<dbReference type="RefSeq" id="NP_006351.2">
    <molecule id="Q7L2H7-1"/>
    <property type="nucleotide sequence ID" value="NM_006360.5"/>
</dbReference>
<dbReference type="PDB" id="3J8B">
    <property type="method" value="EM"/>
    <property type="chains" value="M=1-335"/>
</dbReference>
<dbReference type="PDB" id="3J8C">
    <property type="method" value="EM"/>
    <property type="chains" value="M=1-335"/>
</dbReference>
<dbReference type="PDB" id="6FEC">
    <property type="method" value="EM"/>
    <property type="resolution" value="6.30 A"/>
    <property type="chains" value="8=1-374"/>
</dbReference>
<dbReference type="PDB" id="6YBD">
    <property type="method" value="EM"/>
    <property type="resolution" value="3.30 A"/>
    <property type="chains" value="6=1-374"/>
</dbReference>
<dbReference type="PDB" id="6ZMW">
    <property type="method" value="EM"/>
    <property type="resolution" value="3.70 A"/>
    <property type="chains" value="6=1-374"/>
</dbReference>
<dbReference type="PDB" id="6ZON">
    <property type="method" value="EM"/>
    <property type="resolution" value="3.00 A"/>
    <property type="chains" value="M=1-374"/>
</dbReference>
<dbReference type="PDB" id="6ZP4">
    <property type="method" value="EM"/>
    <property type="resolution" value="2.90 A"/>
    <property type="chains" value="M=1-374"/>
</dbReference>
<dbReference type="PDB" id="6ZVJ">
    <property type="method" value="EM"/>
    <property type="resolution" value="3.80 A"/>
    <property type="chains" value="M=11-372"/>
</dbReference>
<dbReference type="PDB" id="7A09">
    <property type="method" value="EM"/>
    <property type="resolution" value="3.50 A"/>
    <property type="chains" value="M=1-374"/>
</dbReference>
<dbReference type="PDB" id="7QP6">
    <property type="method" value="EM"/>
    <property type="resolution" value="4.70 A"/>
    <property type="chains" value="6=1-374"/>
</dbReference>
<dbReference type="PDB" id="7QP7">
    <property type="method" value="EM"/>
    <property type="resolution" value="3.70 A"/>
    <property type="chains" value="6=1-374"/>
</dbReference>
<dbReference type="PDB" id="8OZ0">
    <property type="method" value="EM"/>
    <property type="resolution" value="3.50 A"/>
    <property type="chains" value="C=1-374"/>
</dbReference>
<dbReference type="PDB" id="8PJ1">
    <property type="method" value="EM"/>
    <property type="resolution" value="3.40 A"/>
    <property type="chains" value="6=1-374"/>
</dbReference>
<dbReference type="PDB" id="8PJ2">
    <property type="method" value="EM"/>
    <property type="resolution" value="3.40 A"/>
    <property type="chains" value="6=1-374"/>
</dbReference>
<dbReference type="PDB" id="8PJ3">
    <property type="method" value="EM"/>
    <property type="resolution" value="3.70 A"/>
    <property type="chains" value="6=1-374"/>
</dbReference>
<dbReference type="PDB" id="8PJ4">
    <property type="method" value="EM"/>
    <property type="resolution" value="3.20 A"/>
    <property type="chains" value="6=1-374"/>
</dbReference>
<dbReference type="PDB" id="8PJ5">
    <property type="method" value="EM"/>
    <property type="resolution" value="2.90 A"/>
    <property type="chains" value="6=1-374"/>
</dbReference>
<dbReference type="PDB" id="8PJ6">
    <property type="method" value="EM"/>
    <property type="resolution" value="2.90 A"/>
    <property type="chains" value="6=1-374"/>
</dbReference>
<dbReference type="PDB" id="8PPL">
    <property type="method" value="EM"/>
    <property type="resolution" value="2.65 A"/>
    <property type="chains" value="I6=1-374"/>
</dbReference>
<dbReference type="PDB" id="8RG0">
    <property type="method" value="EM"/>
    <property type="resolution" value="3.40 A"/>
    <property type="chains" value="6=1-374"/>
</dbReference>
<dbReference type="PDB" id="8XXN">
    <property type="method" value="EM"/>
    <property type="resolution" value="3.60 A"/>
    <property type="chains" value="3M=1-374"/>
</dbReference>
<dbReference type="PDB" id="9BLN">
    <property type="method" value="EM"/>
    <property type="resolution" value="3.90 A"/>
    <property type="chains" value="6=1-374"/>
</dbReference>
<dbReference type="PDBsum" id="3J8B"/>
<dbReference type="PDBsum" id="3J8C"/>
<dbReference type="PDBsum" id="6FEC"/>
<dbReference type="PDBsum" id="6YBD"/>
<dbReference type="PDBsum" id="6ZMW"/>
<dbReference type="PDBsum" id="6ZON"/>
<dbReference type="PDBsum" id="6ZP4"/>
<dbReference type="PDBsum" id="6ZVJ"/>
<dbReference type="PDBsum" id="7A09"/>
<dbReference type="PDBsum" id="7QP6"/>
<dbReference type="PDBsum" id="7QP7"/>
<dbReference type="PDBsum" id="8OZ0"/>
<dbReference type="PDBsum" id="8PJ1"/>
<dbReference type="PDBsum" id="8PJ2"/>
<dbReference type="PDBsum" id="8PJ3"/>
<dbReference type="PDBsum" id="8PJ4"/>
<dbReference type="PDBsum" id="8PJ5"/>
<dbReference type="PDBsum" id="8PJ6"/>
<dbReference type="PDBsum" id="8PPL"/>
<dbReference type="PDBsum" id="8RG0"/>
<dbReference type="PDBsum" id="8XXN"/>
<dbReference type="PDBsum" id="9BLN"/>
<dbReference type="EMDB" id="EMD-10769"/>
<dbReference type="EMDB" id="EMD-11302"/>
<dbReference type="EMDB" id="EMD-11325"/>
<dbReference type="EMDB" id="EMD-11335"/>
<dbReference type="EMDB" id="EMD-11458"/>
<dbReference type="EMDB" id="EMD-11602"/>
<dbReference type="EMDB" id="EMD-14113"/>
<dbReference type="EMDB" id="EMD-14114"/>
<dbReference type="EMDB" id="EMD-17297"/>
<dbReference type="EMDB" id="EMD-17696"/>
<dbReference type="EMDB" id="EMD-17697"/>
<dbReference type="EMDB" id="EMD-17698"/>
<dbReference type="EMDB" id="EMD-17699"/>
<dbReference type="EMDB" id="EMD-17700"/>
<dbReference type="EMDB" id="EMD-17701"/>
<dbReference type="EMDB" id="EMD-17805"/>
<dbReference type="EMDB" id="EMD-19128"/>
<dbReference type="EMDB" id="EMD-38754"/>
<dbReference type="EMDB" id="EMD-4242"/>
<dbReference type="EMDB" id="EMD-44671"/>
<dbReference type="SMR" id="Q7L2H7"/>
<dbReference type="BioGRID" id="115743">
    <property type="interactions" value="201"/>
</dbReference>
<dbReference type="ComplexPortal" id="CPX-6036">
    <property type="entry name" value="Eukaryotic translation initiation factor 3 complex"/>
</dbReference>
<dbReference type="CORUM" id="Q7L2H7"/>
<dbReference type="DIP" id="DIP-31256N"/>
<dbReference type="FunCoup" id="Q7L2H7">
    <property type="interactions" value="2853"/>
</dbReference>
<dbReference type="IntAct" id="Q7L2H7">
    <property type="interactions" value="108"/>
</dbReference>
<dbReference type="MINT" id="Q7L2H7"/>
<dbReference type="STRING" id="9606.ENSP00000436049"/>
<dbReference type="GlyGen" id="Q7L2H7">
    <property type="glycosylation" value="2 sites, 1 O-linked glycan (2 sites)"/>
</dbReference>
<dbReference type="iPTMnet" id="Q7L2H7"/>
<dbReference type="MetOSite" id="Q7L2H7"/>
<dbReference type="PhosphoSitePlus" id="Q7L2H7"/>
<dbReference type="SwissPalm" id="Q7L2H7"/>
<dbReference type="BioMuta" id="EIF3M"/>
<dbReference type="DMDM" id="74754296"/>
<dbReference type="jPOST" id="Q7L2H7"/>
<dbReference type="MassIVE" id="Q7L2H7"/>
<dbReference type="PaxDb" id="9606-ENSP00000436049"/>
<dbReference type="PeptideAtlas" id="Q7L2H7"/>
<dbReference type="ProteomicsDB" id="5844"/>
<dbReference type="ProteomicsDB" id="68761">
    <molecule id="Q7L2H7-1"/>
</dbReference>
<dbReference type="Pumba" id="Q7L2H7"/>
<dbReference type="Antibodypedia" id="25628">
    <property type="antibodies" value="255 antibodies from 34 providers"/>
</dbReference>
<dbReference type="DNASU" id="10480"/>
<dbReference type="Ensembl" id="ENST00000524896.5">
    <molecule id="Q7L2H7-2"/>
    <property type="protein sequence ID" value="ENSP00000436787.1"/>
    <property type="gene ID" value="ENSG00000149100.13"/>
</dbReference>
<dbReference type="Ensembl" id="ENST00000531120.6">
    <molecule id="Q7L2H7-1"/>
    <property type="protein sequence ID" value="ENSP00000436049.1"/>
    <property type="gene ID" value="ENSG00000149100.13"/>
</dbReference>
<dbReference type="GeneID" id="10480"/>
<dbReference type="KEGG" id="hsa:10480"/>
<dbReference type="MANE-Select" id="ENST00000531120.6">
    <property type="protein sequence ID" value="ENSP00000436049.1"/>
    <property type="RefSeq nucleotide sequence ID" value="NM_006360.6"/>
    <property type="RefSeq protein sequence ID" value="NP_006351.2"/>
</dbReference>
<dbReference type="UCSC" id="uc001mtu.5">
    <molecule id="Q7L2H7-1"/>
    <property type="organism name" value="human"/>
</dbReference>
<dbReference type="AGR" id="HGNC:24460"/>
<dbReference type="CTD" id="10480"/>
<dbReference type="DisGeNET" id="10480"/>
<dbReference type="GeneCards" id="EIF3M"/>
<dbReference type="HGNC" id="HGNC:24460">
    <property type="gene designation" value="EIF3M"/>
</dbReference>
<dbReference type="HPA" id="ENSG00000149100">
    <property type="expression patterns" value="Low tissue specificity"/>
</dbReference>
<dbReference type="MIM" id="609641">
    <property type="type" value="gene"/>
</dbReference>
<dbReference type="neXtProt" id="NX_Q7L2H7"/>
<dbReference type="OpenTargets" id="ENSG00000149100"/>
<dbReference type="PharmGKB" id="PA162384944"/>
<dbReference type="VEuPathDB" id="HostDB:ENSG00000149100"/>
<dbReference type="eggNOG" id="KOG2753">
    <property type="taxonomic scope" value="Eukaryota"/>
</dbReference>
<dbReference type="GeneTree" id="ENSGT00390000004456"/>
<dbReference type="HOGENOM" id="CLU_035254_1_0_1"/>
<dbReference type="InParanoid" id="Q7L2H7"/>
<dbReference type="OMA" id="VCLKALW"/>
<dbReference type="OrthoDB" id="10267031at2759"/>
<dbReference type="PAN-GO" id="Q7L2H7">
    <property type="GO annotations" value="2 GO annotations based on evolutionary models"/>
</dbReference>
<dbReference type="PhylomeDB" id="Q7L2H7"/>
<dbReference type="TreeFam" id="TF106148"/>
<dbReference type="PathwayCommons" id="Q7L2H7"/>
<dbReference type="Reactome" id="R-HSA-156827">
    <property type="pathway name" value="L13a-mediated translational silencing of Ceruloplasmin expression"/>
</dbReference>
<dbReference type="Reactome" id="R-HSA-72649">
    <property type="pathway name" value="Translation initiation complex formation"/>
</dbReference>
<dbReference type="Reactome" id="R-HSA-72689">
    <property type="pathway name" value="Formation of a pool of free 40S subunits"/>
</dbReference>
<dbReference type="Reactome" id="R-HSA-72695">
    <property type="pathway name" value="Formation of the ternary complex, and subsequently, the 43S complex"/>
</dbReference>
<dbReference type="Reactome" id="R-HSA-72702">
    <property type="pathway name" value="Ribosomal scanning and start codon recognition"/>
</dbReference>
<dbReference type="Reactome" id="R-HSA-72706">
    <property type="pathway name" value="GTP hydrolysis and joining of the 60S ribosomal subunit"/>
</dbReference>
<dbReference type="SignaLink" id="Q7L2H7"/>
<dbReference type="SIGNOR" id="Q7L2H7"/>
<dbReference type="BioGRID-ORCS" id="10480">
    <property type="hits" value="689 hits in 1168 CRISPR screens"/>
</dbReference>
<dbReference type="CD-CODE" id="DEE660B4">
    <property type="entry name" value="Stress granule"/>
</dbReference>
<dbReference type="ChiTaRS" id="EIF3M">
    <property type="organism name" value="human"/>
</dbReference>
<dbReference type="EvolutionaryTrace" id="Q7L2H7"/>
<dbReference type="GeneWiki" id="EIF3M"/>
<dbReference type="GenomeRNAi" id="10480"/>
<dbReference type="Pharos" id="Q7L2H7">
    <property type="development level" value="Tbio"/>
</dbReference>
<dbReference type="PRO" id="PR:Q7L2H7"/>
<dbReference type="Proteomes" id="UP000005640">
    <property type="component" value="Chromosome 11"/>
</dbReference>
<dbReference type="RNAct" id="Q7L2H7">
    <property type="molecule type" value="protein"/>
</dbReference>
<dbReference type="Bgee" id="ENSG00000149100">
    <property type="expression patterns" value="Expressed in germinal epithelium of ovary and 206 other cell types or tissues"/>
</dbReference>
<dbReference type="ExpressionAtlas" id="Q7L2H7">
    <property type="expression patterns" value="baseline and differential"/>
</dbReference>
<dbReference type="GO" id="GO:0005829">
    <property type="term" value="C:cytosol"/>
    <property type="evidence" value="ECO:0000304"/>
    <property type="project" value="Reactome"/>
</dbReference>
<dbReference type="GO" id="GO:0016282">
    <property type="term" value="C:eukaryotic 43S preinitiation complex"/>
    <property type="evidence" value="ECO:0007669"/>
    <property type="project" value="UniProtKB-UniRule"/>
</dbReference>
<dbReference type="GO" id="GO:0033290">
    <property type="term" value="C:eukaryotic 48S preinitiation complex"/>
    <property type="evidence" value="ECO:0007669"/>
    <property type="project" value="UniProtKB-UniRule"/>
</dbReference>
<dbReference type="GO" id="GO:0005852">
    <property type="term" value="C:eukaryotic translation initiation factor 3 complex"/>
    <property type="evidence" value="ECO:0000314"/>
    <property type="project" value="UniProtKB"/>
</dbReference>
<dbReference type="GO" id="GO:0071541">
    <property type="term" value="C:eukaryotic translation initiation factor 3 complex, eIF3m"/>
    <property type="evidence" value="ECO:0007669"/>
    <property type="project" value="UniProtKB-UniRule"/>
</dbReference>
<dbReference type="GO" id="GO:0003743">
    <property type="term" value="F:translation initiation factor activity"/>
    <property type="evidence" value="ECO:0007669"/>
    <property type="project" value="UniProtKB-UniRule"/>
</dbReference>
<dbReference type="GO" id="GO:0031369">
    <property type="term" value="F:translation initiation factor binding"/>
    <property type="evidence" value="ECO:0007669"/>
    <property type="project" value="Ensembl"/>
</dbReference>
<dbReference type="GO" id="GO:0002183">
    <property type="term" value="P:cytoplasmic translational initiation"/>
    <property type="evidence" value="ECO:0000318"/>
    <property type="project" value="GO_Central"/>
</dbReference>
<dbReference type="GO" id="GO:0001732">
    <property type="term" value="P:formation of cytoplasmic translation initiation complex"/>
    <property type="evidence" value="ECO:0000303"/>
    <property type="project" value="ComplexPortal"/>
</dbReference>
<dbReference type="GO" id="GO:0006413">
    <property type="term" value="P:translational initiation"/>
    <property type="evidence" value="ECO:0000305"/>
    <property type="project" value="UniProtKB"/>
</dbReference>
<dbReference type="HAMAP" id="MF_03012">
    <property type="entry name" value="eIF3m"/>
    <property type="match status" value="1"/>
</dbReference>
<dbReference type="InterPro" id="IPR016024">
    <property type="entry name" value="ARM-type_fold"/>
</dbReference>
<dbReference type="InterPro" id="IPR045237">
    <property type="entry name" value="COPS7/eIF3m"/>
</dbReference>
<dbReference type="InterPro" id="IPR027528">
    <property type="entry name" value="eIF3m"/>
</dbReference>
<dbReference type="InterPro" id="IPR040750">
    <property type="entry name" value="eIF3m_C_helix"/>
</dbReference>
<dbReference type="InterPro" id="IPR000717">
    <property type="entry name" value="PCI_dom"/>
</dbReference>
<dbReference type="InterPro" id="IPR036390">
    <property type="entry name" value="WH_DNA-bd_sf"/>
</dbReference>
<dbReference type="PANTHER" id="PTHR15350">
    <property type="entry name" value="COP9 SIGNALOSOME COMPLEX SUBUNIT 7/DENDRITIC CELL PROTEIN GA17"/>
    <property type="match status" value="1"/>
</dbReference>
<dbReference type="PANTHER" id="PTHR15350:SF2">
    <property type="entry name" value="EUKARYOTIC TRANSLATION INITIATION FACTOR 3 SUBUNIT M"/>
    <property type="match status" value="1"/>
</dbReference>
<dbReference type="Pfam" id="PF18005">
    <property type="entry name" value="eIF3m_C_helix"/>
    <property type="match status" value="1"/>
</dbReference>
<dbReference type="Pfam" id="PF01399">
    <property type="entry name" value="PCI"/>
    <property type="match status" value="1"/>
</dbReference>
<dbReference type="SMART" id="SM00088">
    <property type="entry name" value="PINT"/>
    <property type="match status" value="1"/>
</dbReference>
<dbReference type="SUPFAM" id="SSF48371">
    <property type="entry name" value="ARM repeat"/>
    <property type="match status" value="1"/>
</dbReference>
<dbReference type="SUPFAM" id="SSF46785">
    <property type="entry name" value="Winged helix' DNA-binding domain"/>
    <property type="match status" value="1"/>
</dbReference>
<dbReference type="PROSITE" id="PS50250">
    <property type="entry name" value="PCI"/>
    <property type="match status" value="1"/>
</dbReference>
<evidence type="ECO:0000255" key="1">
    <source>
        <dbReference type="HAMAP-Rule" id="MF_03012"/>
    </source>
</evidence>
<evidence type="ECO:0000255" key="2">
    <source>
        <dbReference type="PROSITE-ProRule" id="PRU01185"/>
    </source>
</evidence>
<evidence type="ECO:0000269" key="3">
    <source>
    </source>
</evidence>
<evidence type="ECO:0000269" key="4">
    <source>
    </source>
</evidence>
<evidence type="ECO:0000269" key="5">
    <source>
    </source>
</evidence>
<evidence type="ECO:0000269" key="6">
    <source>
    </source>
</evidence>
<evidence type="ECO:0000269" key="7">
    <source>
    </source>
</evidence>
<evidence type="ECO:0000269" key="8">
    <source>
    </source>
</evidence>
<evidence type="ECO:0000269" key="9">
    <source>
    </source>
</evidence>
<evidence type="ECO:0000269" key="10">
    <source>
    </source>
</evidence>
<evidence type="ECO:0000269" key="11">
    <source>
    </source>
</evidence>
<evidence type="ECO:0000269" key="12">
    <source>
    </source>
</evidence>
<evidence type="ECO:0000269" key="13">
    <source>
    </source>
</evidence>
<evidence type="ECO:0000269" key="14">
    <source ref="2"/>
</evidence>
<evidence type="ECO:0000269" key="15">
    <source ref="9"/>
</evidence>
<evidence type="ECO:0000303" key="16">
    <source>
    </source>
</evidence>
<evidence type="ECO:0000305" key="17"/>
<evidence type="ECO:0007744" key="18">
    <source>
    </source>
</evidence>
<evidence type="ECO:0007744" key="19">
    <source>
    </source>
</evidence>
<evidence type="ECO:0007744" key="20">
    <source>
    </source>
</evidence>
<evidence type="ECO:0007744" key="21">
    <source>
    </source>
</evidence>
<evidence type="ECO:0007744" key="22">
    <source>
    </source>
</evidence>
<evidence type="ECO:0007829" key="23">
    <source>
        <dbReference type="PDB" id="6YBD"/>
    </source>
</evidence>
<evidence type="ECO:0007829" key="24">
    <source>
        <dbReference type="PDB" id="8RG0"/>
    </source>
</evidence>
<reference key="1">
    <citation type="journal article" date="2005" name="J. Virol.">
        <title>A new class of receptor for herpes simplex virus has heptad repeat motifs that are common to membrane fusion proteins.</title>
        <authorList>
            <person name="Perez A."/>
            <person name="Li Q.-X."/>
            <person name="Perez-Romero P."/>
            <person name="DeLassus G."/>
            <person name="Lopez S.R."/>
            <person name="Sutter S."/>
            <person name="McLaren N."/>
            <person name="Fuller A.O."/>
        </authorList>
    </citation>
    <scope>NUCLEOTIDE SEQUENCE [MRNA] (ISOFORM 1)</scope>
    <scope>FUNCTION (MICROBIAL INFECTION)</scope>
    <scope>TISSUE SPECIFICITY</scope>
    <source>
        <tissue>Fetal lung</tissue>
    </source>
</reference>
<reference key="2">
    <citation type="submission" date="1998-05" db="EMBL/GenBank/DDBJ databases">
        <title>A novel gene from human dendritic cell.</title>
        <authorList>
            <person name="Zhao Z."/>
            <person name="Huang X."/>
            <person name="Li N."/>
            <person name="Zhu X."/>
            <person name="Cao X."/>
        </authorList>
    </citation>
    <scope>NUCLEOTIDE SEQUENCE [LARGE SCALE MRNA] (ISOFORM 1)</scope>
    <scope>VARIANT ARG-346</scope>
    <source>
        <tissue>Dendritic cell</tissue>
    </source>
</reference>
<reference key="3">
    <citation type="submission" date="2004-05" db="EMBL/GenBank/DDBJ databases">
        <title>Cloning of human full open reading frames in Gateway(TM) system entry vector (pDONR201).</title>
        <authorList>
            <person name="Ebert L."/>
            <person name="Schick M."/>
            <person name="Neubert P."/>
            <person name="Schatten R."/>
            <person name="Henze S."/>
            <person name="Korn B."/>
        </authorList>
    </citation>
    <scope>NUCLEOTIDE SEQUENCE [LARGE SCALE MRNA] (ISOFORM 1)</scope>
</reference>
<reference key="4">
    <citation type="journal article" date="2004" name="Nat. Genet.">
        <title>Complete sequencing and characterization of 21,243 full-length human cDNAs.</title>
        <authorList>
            <person name="Ota T."/>
            <person name="Suzuki Y."/>
            <person name="Nishikawa T."/>
            <person name="Otsuki T."/>
            <person name="Sugiyama T."/>
            <person name="Irie R."/>
            <person name="Wakamatsu A."/>
            <person name="Hayashi K."/>
            <person name="Sato H."/>
            <person name="Nagai K."/>
            <person name="Kimura K."/>
            <person name="Makita H."/>
            <person name="Sekine M."/>
            <person name="Obayashi M."/>
            <person name="Nishi T."/>
            <person name="Shibahara T."/>
            <person name="Tanaka T."/>
            <person name="Ishii S."/>
            <person name="Yamamoto J."/>
            <person name="Saito K."/>
            <person name="Kawai Y."/>
            <person name="Isono Y."/>
            <person name="Nakamura Y."/>
            <person name="Nagahari K."/>
            <person name="Murakami K."/>
            <person name="Yasuda T."/>
            <person name="Iwayanagi T."/>
            <person name="Wagatsuma M."/>
            <person name="Shiratori A."/>
            <person name="Sudo H."/>
            <person name="Hosoiri T."/>
            <person name="Kaku Y."/>
            <person name="Kodaira H."/>
            <person name="Kondo H."/>
            <person name="Sugawara M."/>
            <person name="Takahashi M."/>
            <person name="Kanda K."/>
            <person name="Yokoi T."/>
            <person name="Furuya T."/>
            <person name="Kikkawa E."/>
            <person name="Omura Y."/>
            <person name="Abe K."/>
            <person name="Kamihara K."/>
            <person name="Katsuta N."/>
            <person name="Sato K."/>
            <person name="Tanikawa M."/>
            <person name="Yamazaki M."/>
            <person name="Ninomiya K."/>
            <person name="Ishibashi T."/>
            <person name="Yamashita H."/>
            <person name="Murakawa K."/>
            <person name="Fujimori K."/>
            <person name="Tanai H."/>
            <person name="Kimata M."/>
            <person name="Watanabe M."/>
            <person name="Hiraoka S."/>
            <person name="Chiba Y."/>
            <person name="Ishida S."/>
            <person name="Ono Y."/>
            <person name="Takiguchi S."/>
            <person name="Watanabe S."/>
            <person name="Yosida M."/>
            <person name="Hotuta T."/>
            <person name="Kusano J."/>
            <person name="Kanehori K."/>
            <person name="Takahashi-Fujii A."/>
            <person name="Hara H."/>
            <person name="Tanase T.-O."/>
            <person name="Nomura Y."/>
            <person name="Togiya S."/>
            <person name="Komai F."/>
            <person name="Hara R."/>
            <person name="Takeuchi K."/>
            <person name="Arita M."/>
            <person name="Imose N."/>
            <person name="Musashino K."/>
            <person name="Yuuki H."/>
            <person name="Oshima A."/>
            <person name="Sasaki N."/>
            <person name="Aotsuka S."/>
            <person name="Yoshikawa Y."/>
            <person name="Matsunawa H."/>
            <person name="Ichihara T."/>
            <person name="Shiohata N."/>
            <person name="Sano S."/>
            <person name="Moriya S."/>
            <person name="Momiyama H."/>
            <person name="Satoh N."/>
            <person name="Takami S."/>
            <person name="Terashima Y."/>
            <person name="Suzuki O."/>
            <person name="Nakagawa S."/>
            <person name="Senoh A."/>
            <person name="Mizoguchi H."/>
            <person name="Goto Y."/>
            <person name="Shimizu F."/>
            <person name="Wakebe H."/>
            <person name="Hishigaki H."/>
            <person name="Watanabe T."/>
            <person name="Sugiyama A."/>
            <person name="Takemoto M."/>
            <person name="Kawakami B."/>
            <person name="Yamazaki M."/>
            <person name="Watanabe K."/>
            <person name="Kumagai A."/>
            <person name="Itakura S."/>
            <person name="Fukuzumi Y."/>
            <person name="Fujimori Y."/>
            <person name="Komiyama M."/>
            <person name="Tashiro H."/>
            <person name="Tanigami A."/>
            <person name="Fujiwara T."/>
            <person name="Ono T."/>
            <person name="Yamada K."/>
            <person name="Fujii Y."/>
            <person name="Ozaki K."/>
            <person name="Hirao M."/>
            <person name="Ohmori Y."/>
            <person name="Kawabata A."/>
            <person name="Hikiji T."/>
            <person name="Kobatake N."/>
            <person name="Inagaki H."/>
            <person name="Ikema Y."/>
            <person name="Okamoto S."/>
            <person name="Okitani R."/>
            <person name="Kawakami T."/>
            <person name="Noguchi S."/>
            <person name="Itoh T."/>
            <person name="Shigeta K."/>
            <person name="Senba T."/>
            <person name="Matsumura K."/>
            <person name="Nakajima Y."/>
            <person name="Mizuno T."/>
            <person name="Morinaga M."/>
            <person name="Sasaki M."/>
            <person name="Togashi T."/>
            <person name="Oyama M."/>
            <person name="Hata H."/>
            <person name="Watanabe M."/>
            <person name="Komatsu T."/>
            <person name="Mizushima-Sugano J."/>
            <person name="Satoh T."/>
            <person name="Shirai Y."/>
            <person name="Takahashi Y."/>
            <person name="Nakagawa K."/>
            <person name="Okumura K."/>
            <person name="Nagase T."/>
            <person name="Nomura N."/>
            <person name="Kikuchi H."/>
            <person name="Masuho Y."/>
            <person name="Yamashita R."/>
            <person name="Nakai K."/>
            <person name="Yada T."/>
            <person name="Nakamura Y."/>
            <person name="Ohara O."/>
            <person name="Isogai T."/>
            <person name="Sugano S."/>
        </authorList>
    </citation>
    <scope>NUCLEOTIDE SEQUENCE [LARGE SCALE MRNA] (ISOFORMS 1 AND 2)</scope>
    <source>
        <tissue>Synovium</tissue>
        <tissue>Thalamus</tissue>
        <tissue>Trachea</tissue>
    </source>
</reference>
<reference key="5">
    <citation type="submission" date="2005-04" db="EMBL/GenBank/DDBJ databases">
        <authorList>
            <person name="Suzuki Y."/>
            <person name="Sugano S."/>
            <person name="Totoki Y."/>
            <person name="Toyoda A."/>
            <person name="Takeda T."/>
            <person name="Sakaki Y."/>
            <person name="Tanaka A."/>
            <person name="Yokoyama S."/>
        </authorList>
    </citation>
    <scope>NUCLEOTIDE SEQUENCE [LARGE SCALE MRNA] (ISOFORM 1)</scope>
    <source>
        <tissue>Coronary arterial endothelium</tissue>
    </source>
</reference>
<reference key="6">
    <citation type="journal article" date="2006" name="Nature">
        <title>Human chromosome 11 DNA sequence and analysis including novel gene identification.</title>
        <authorList>
            <person name="Taylor T.D."/>
            <person name="Noguchi H."/>
            <person name="Totoki Y."/>
            <person name="Toyoda A."/>
            <person name="Kuroki Y."/>
            <person name="Dewar K."/>
            <person name="Lloyd C."/>
            <person name="Itoh T."/>
            <person name="Takeda T."/>
            <person name="Kim D.-W."/>
            <person name="She X."/>
            <person name="Barlow K.F."/>
            <person name="Bloom T."/>
            <person name="Bruford E."/>
            <person name="Chang J.L."/>
            <person name="Cuomo C.A."/>
            <person name="Eichler E."/>
            <person name="FitzGerald M.G."/>
            <person name="Jaffe D.B."/>
            <person name="LaButti K."/>
            <person name="Nicol R."/>
            <person name="Park H.-S."/>
            <person name="Seaman C."/>
            <person name="Sougnez C."/>
            <person name="Yang X."/>
            <person name="Zimmer A.R."/>
            <person name="Zody M.C."/>
            <person name="Birren B.W."/>
            <person name="Nusbaum C."/>
            <person name="Fujiyama A."/>
            <person name="Hattori M."/>
            <person name="Rogers J."/>
            <person name="Lander E.S."/>
            <person name="Sakaki Y."/>
        </authorList>
    </citation>
    <scope>NUCLEOTIDE SEQUENCE [LARGE SCALE GENOMIC DNA]</scope>
</reference>
<reference key="7">
    <citation type="submission" date="2005-09" db="EMBL/GenBank/DDBJ databases">
        <authorList>
            <person name="Mural R.J."/>
            <person name="Istrail S."/>
            <person name="Sutton G.G."/>
            <person name="Florea L."/>
            <person name="Halpern A.L."/>
            <person name="Mobarry C.M."/>
            <person name="Lippert R."/>
            <person name="Walenz B."/>
            <person name="Shatkay H."/>
            <person name="Dew I."/>
            <person name="Miller J.R."/>
            <person name="Flanigan M.J."/>
            <person name="Edwards N.J."/>
            <person name="Bolanos R."/>
            <person name="Fasulo D."/>
            <person name="Halldorsson B.V."/>
            <person name="Hannenhalli S."/>
            <person name="Turner R."/>
            <person name="Yooseph S."/>
            <person name="Lu F."/>
            <person name="Nusskern D.R."/>
            <person name="Shue B.C."/>
            <person name="Zheng X.H."/>
            <person name="Zhong F."/>
            <person name="Delcher A.L."/>
            <person name="Huson D.H."/>
            <person name="Kravitz S.A."/>
            <person name="Mouchard L."/>
            <person name="Reinert K."/>
            <person name="Remington K.A."/>
            <person name="Clark A.G."/>
            <person name="Waterman M.S."/>
            <person name="Eichler E.E."/>
            <person name="Adams M.D."/>
            <person name="Hunkapiller M.W."/>
            <person name="Myers E.W."/>
            <person name="Venter J.C."/>
        </authorList>
    </citation>
    <scope>NUCLEOTIDE SEQUENCE [LARGE SCALE GENOMIC DNA]</scope>
</reference>
<reference key="8">
    <citation type="journal article" date="2004" name="Genome Res.">
        <title>The status, quality, and expansion of the NIH full-length cDNA project: the Mammalian Gene Collection (MGC).</title>
        <authorList>
            <consortium name="The MGC Project Team"/>
        </authorList>
    </citation>
    <scope>NUCLEOTIDE SEQUENCE [LARGE SCALE MRNA] (ISOFORM 1)</scope>
    <source>
        <tissue>Muscle</tissue>
        <tissue>Uterus</tissue>
    </source>
</reference>
<reference key="9">
    <citation type="submission" date="2008-03" db="UniProtKB">
        <authorList>
            <person name="Bienvenut W.V."/>
            <person name="Boldt K."/>
            <person name="von Kriegsheim A.F."/>
            <person name="Kolch W."/>
            <person name="Vousden K.H."/>
            <person name="Lukashchuk N."/>
        </authorList>
    </citation>
    <scope>PROTEIN SEQUENCE OF 2-19; 103-115; 184-201; 261-276 AND 279-290</scope>
    <scope>CLEAVAGE OF INITIATOR METHIONINE</scope>
    <scope>ACETYLATION AT SER-2</scope>
    <scope>IDENTIFICATION BY MASS SPECTROMETRY</scope>
    <source>
        <tissue>Hepatoma</tissue>
        <tissue>Lung carcinoma</tissue>
    </source>
</reference>
<reference key="10">
    <citation type="journal article" date="2007" name="Brain Res.">
        <title>Subtractive hybridisation screen identifies genes regulated by glucose deprivation in human neuroblastoma cells.</title>
        <authorList>
            <person name="Kobayashi K."/>
            <person name="Xin Y."/>
            <person name="Ymer S.I."/>
            <person name="Werther G.A."/>
            <person name="Russo V.C."/>
        </authorList>
    </citation>
    <scope>NUCLEOTIDE SEQUENCE [MRNA] OF 4-139 (ISOFORM 1)</scope>
    <scope>INDUCTION</scope>
</reference>
<reference key="11">
    <citation type="submission" date="2000-06" db="EMBL/GenBank/DDBJ databases">
        <title>Human acute promyelocytic leukemia cell line NB4's apoptosis/differentiation related genes.</title>
        <authorList>
            <person name="Yu W.-Q."/>
            <person name="Sun B.-Z."/>
            <person name="Chai Y.-B."/>
            <person name="Zhu F."/>
            <person name="Liu X.-S."/>
            <person name="Li Z."/>
            <person name="Lu F."/>
            <person name="Yan W."/>
            <person name="Yang H."/>
            <person name="Zhao Z.-L."/>
        </authorList>
    </citation>
    <scope>NUCLEOTIDE SEQUENCE [LARGE SCALE MRNA] OF 171-374 (ISOFORM 1/2)</scope>
</reference>
<reference key="12">
    <citation type="journal article" date="2004" name="Genes Dev.">
        <title>Release of initiation factors from 48S complexes during ribosomal subunit joining and the link between establishment of codon-anticodon base-pairing and hydrolysis of eIF2-bound GTP.</title>
        <authorList>
            <person name="Unbehaun A."/>
            <person name="Borukhov S.I."/>
            <person name="Hellen C.U.T."/>
            <person name="Pestova T.V."/>
        </authorList>
    </citation>
    <scope>IDENTIFICATION IN THE EIF-3 COMPLEX</scope>
    <scope>IDENTIFICATION BY MASS SPECTROMETRY</scope>
</reference>
<reference key="13">
    <citation type="journal article" date="2005" name="BMC Biol.">
        <title>PCI proteins eIF3e and eIF3m define distinct translation initiation factor 3 complexes.</title>
        <authorList>
            <person name="Zhou C."/>
            <person name="Arslan F."/>
            <person name="Wee S."/>
            <person name="Krishnan S."/>
            <person name="Ivanov A.R."/>
            <person name="Oliva A."/>
            <person name="Leatherwood J."/>
            <person name="Wolf D.A."/>
        </authorList>
    </citation>
    <scope>IDENTIFICATION</scope>
</reference>
<reference key="14">
    <citation type="journal article" date="2005" name="J. Virol.">
        <title>The C-terminus of the B5 receptor for herpes simplex virus contains a functional region important for infection.</title>
        <authorList>
            <person name="Perez-Romero P."/>
            <person name="Fuller A.O."/>
        </authorList>
    </citation>
    <scope>MUTAGENESIS OF LEU-350; LEU-354; LEU-361 AND VAL-364</scope>
</reference>
<reference key="15">
    <citation type="journal article" date="2005" name="Nat. Biotechnol.">
        <title>Immunoaffinity profiling of tyrosine phosphorylation in cancer cells.</title>
        <authorList>
            <person name="Rush J."/>
            <person name="Moritz A."/>
            <person name="Lee K.A."/>
            <person name="Guo A."/>
            <person name="Goss V.L."/>
            <person name="Spek E.J."/>
            <person name="Zhang H."/>
            <person name="Zha X.-M."/>
            <person name="Polakiewicz R.D."/>
            <person name="Comb M.J."/>
        </authorList>
    </citation>
    <scope>IDENTIFICATION BY MASS SPECTROMETRY [LARGE SCALE ANALYSIS]</scope>
</reference>
<reference key="16">
    <citation type="journal article" date="2005" name="RNA">
        <title>Binding of eukaryotic initiation factor 3 to ribosomal 40S subunits and its role in ribosomal dissociation and anti-association.</title>
        <authorList>
            <person name="Kolupaeva V.G."/>
            <person name="Unbehaun A."/>
            <person name="Lomakin I.B."/>
            <person name="Hellen C.U.T."/>
            <person name="Pestova T.V."/>
        </authorList>
    </citation>
    <scope>CHARACTERIZATION OF THE EIF-3 COMPLEX</scope>
</reference>
<reference key="17">
    <citation type="journal article" date="2006" name="J. Biol. Chem.">
        <title>Translation initiation factor eIF4G-1 binds to eIF3 through the eIF3e subunit.</title>
        <authorList>
            <person name="LeFebvre A.K."/>
            <person name="Korneeva N.L."/>
            <person name="Trutschl M."/>
            <person name="Cvek U."/>
            <person name="Duzan R.D."/>
            <person name="Bradley C.A."/>
            <person name="Hershey J.W.B."/>
            <person name="Rhoads R.E."/>
        </authorList>
    </citation>
    <scope>IDENTIFICATION IN THE EIF-3 COMPLEX</scope>
    <scope>IDENTIFICATION BY MASS SPECTROMETRY</scope>
</reference>
<reference key="18">
    <citation type="journal article" date="2007" name="Mol. Cell. Biol.">
        <title>CIF-1, a shared subunit of the COP9/signalosome and eukaryotic initiation factor 3 complexes, regulates MEL-26 levels in the Caenorhabditis elegans embryo.</title>
        <authorList>
            <person name="Luke-Glaser S."/>
            <person name="Roy M."/>
            <person name="Larsen B."/>
            <person name="Le Bihan T."/>
            <person name="Metalnikov P."/>
            <person name="Tyers M."/>
            <person name="Peter M."/>
            <person name="Pintard L."/>
        </authorList>
    </citation>
    <scope>FUNCTION</scope>
    <scope>IDENTIFICATION IN THE EIF-3 COMPLEX</scope>
</reference>
<reference key="19">
    <citation type="journal article" date="2007" name="Mol. Cell. Proteomics">
        <title>Structural characterization of the human eukaryotic initiation factor 3 protein complex by mass spectrometry.</title>
        <authorList>
            <person name="Damoc E."/>
            <person name="Fraser C.S."/>
            <person name="Zhou M."/>
            <person name="Videler H."/>
            <person name="Mayeur G.L."/>
            <person name="Hershey J.W.B."/>
            <person name="Doudna J.A."/>
            <person name="Robinson C.V."/>
            <person name="Leary J.A."/>
        </authorList>
    </citation>
    <scope>IDENTIFICATION IN THE EIF-3 COMPLEX</scope>
    <scope>CHARACTERIZATION OF THE EIF-3 COMPLEX</scope>
    <scope>CLEAVAGE OF INITIATOR METHIONINE</scope>
    <scope>ACETYLATION AT SER-2</scope>
    <scope>MASS SPECTROMETRY</scope>
</reference>
<reference key="20">
    <citation type="journal article" date="2008" name="Proc. Natl. Acad. Sci. U.S.A.">
        <title>Mass spectrometry reveals modularity and a complete subunit interaction map of the eukaryotic translation factor eIF3.</title>
        <authorList>
            <person name="Zhou M."/>
            <person name="Sandercock A.M."/>
            <person name="Fraser C.S."/>
            <person name="Ridlova G."/>
            <person name="Stephens E."/>
            <person name="Schenauer M.R."/>
            <person name="Yokoi-Fong T."/>
            <person name="Barsky D."/>
            <person name="Leary J.A."/>
            <person name="Hershey J.W.B."/>
            <person name="Doudna J.A."/>
            <person name="Robinson C.V."/>
        </authorList>
    </citation>
    <scope>IDENTIFICATION IN THE EIF-3 COMPLEX</scope>
    <scope>CHARACTERIZATION OF THE EIF-3 COMPLEX</scope>
    <scope>MASS SPECTROMETRY</scope>
    <scope>INTERACTION WITH EIF3B; EIF3F AND EIF3H</scope>
</reference>
<reference key="21">
    <citation type="journal article" date="2009" name="Anal. Chem.">
        <title>Lys-N and trypsin cover complementary parts of the phosphoproteome in a refined SCX-based approach.</title>
        <authorList>
            <person name="Gauci S."/>
            <person name="Helbig A.O."/>
            <person name="Slijper M."/>
            <person name="Krijgsveld J."/>
            <person name="Heck A.J."/>
            <person name="Mohammed S."/>
        </authorList>
    </citation>
    <scope>ACETYLATION [LARGE SCALE ANALYSIS] AT SER-2</scope>
    <scope>CLEAVAGE OF INITIATOR METHIONINE [LARGE SCALE ANALYSIS]</scope>
    <scope>IDENTIFICATION BY MASS SPECTROMETRY [LARGE SCALE ANALYSIS]</scope>
</reference>
<reference key="22">
    <citation type="journal article" date="2009" name="Science">
        <title>Lysine acetylation targets protein complexes and co-regulates major cellular functions.</title>
        <authorList>
            <person name="Choudhary C."/>
            <person name="Kumar C."/>
            <person name="Gnad F."/>
            <person name="Nielsen M.L."/>
            <person name="Rehman M."/>
            <person name="Walther T.C."/>
            <person name="Olsen J.V."/>
            <person name="Mann M."/>
        </authorList>
    </citation>
    <scope>ACETYLATION [LARGE SCALE ANALYSIS] AT LYS-254</scope>
    <scope>IDENTIFICATION BY MASS SPECTROMETRY [LARGE SCALE ANALYSIS]</scope>
</reference>
<reference key="23">
    <citation type="journal article" date="2011" name="BMC Syst. Biol.">
        <title>Initial characterization of the human central proteome.</title>
        <authorList>
            <person name="Burkard T.R."/>
            <person name="Planyavsky M."/>
            <person name="Kaupe I."/>
            <person name="Breitwieser F.P."/>
            <person name="Buerckstuemmer T."/>
            <person name="Bennett K.L."/>
            <person name="Superti-Furga G."/>
            <person name="Colinge J."/>
        </authorList>
    </citation>
    <scope>IDENTIFICATION BY MASS SPECTROMETRY [LARGE SCALE ANALYSIS]</scope>
</reference>
<reference key="24">
    <citation type="journal article" date="2011" name="Sci. Signal.">
        <title>System-wide temporal characterization of the proteome and phosphoproteome of human embryonic stem cell differentiation.</title>
        <authorList>
            <person name="Rigbolt K.T."/>
            <person name="Prokhorova T.A."/>
            <person name="Akimov V."/>
            <person name="Henningsen J."/>
            <person name="Johansen P.T."/>
            <person name="Kratchmarova I."/>
            <person name="Kassem M."/>
            <person name="Mann M."/>
            <person name="Olsen J.V."/>
            <person name="Blagoev B."/>
        </authorList>
    </citation>
    <scope>ACETYLATION [LARGE SCALE ANALYSIS] AT SER-2</scope>
    <scope>PHOSPHORYLATION [LARGE SCALE ANALYSIS] AT SER-2</scope>
    <scope>CLEAVAGE OF INITIATOR METHIONINE [LARGE SCALE ANALYSIS]</scope>
    <scope>IDENTIFICATION BY MASS SPECTROMETRY [LARGE SCALE ANALYSIS]</scope>
</reference>
<reference key="25">
    <citation type="journal article" date="2012" name="Proc. Natl. Acad. Sci. U.S.A.">
        <title>N-terminal acetylome analyses and functional insights of the N-terminal acetyltransferase NatB.</title>
        <authorList>
            <person name="Van Damme P."/>
            <person name="Lasa M."/>
            <person name="Polevoda B."/>
            <person name="Gazquez C."/>
            <person name="Elosegui-Artola A."/>
            <person name="Kim D.S."/>
            <person name="De Juan-Pardo E."/>
            <person name="Demeyer K."/>
            <person name="Hole K."/>
            <person name="Larrea E."/>
            <person name="Timmerman E."/>
            <person name="Prieto J."/>
            <person name="Arnesen T."/>
            <person name="Sherman F."/>
            <person name="Gevaert K."/>
            <person name="Aldabe R."/>
        </authorList>
    </citation>
    <scope>ACETYLATION [LARGE SCALE ANALYSIS] AT SER-2</scope>
    <scope>CLEAVAGE OF INITIATOR METHIONINE [LARGE SCALE ANALYSIS]</scope>
    <scope>IDENTIFICATION BY MASS SPECTROMETRY [LARGE SCALE ANALYSIS]</scope>
</reference>
<reference key="26">
    <citation type="journal article" date="2013" name="J. Proteome Res.">
        <title>Toward a comprehensive characterization of a human cancer cell phosphoproteome.</title>
        <authorList>
            <person name="Zhou H."/>
            <person name="Di Palma S."/>
            <person name="Preisinger C."/>
            <person name="Peng M."/>
            <person name="Polat A.N."/>
            <person name="Heck A.J."/>
            <person name="Mohammed S."/>
        </authorList>
    </citation>
    <scope>PHOSPHORYLATION [LARGE SCALE ANALYSIS] AT SER-2; SER-152 AND SER-367</scope>
    <scope>IDENTIFICATION BY MASS SPECTROMETRY [LARGE SCALE ANALYSIS]</scope>
    <source>
        <tissue>Erythroleukemia</tissue>
    </source>
</reference>
<reference key="27">
    <citation type="journal article" date="2014" name="J. Proteomics">
        <title>An enzyme assisted RP-RPLC approach for in-depth analysis of human liver phosphoproteome.</title>
        <authorList>
            <person name="Bian Y."/>
            <person name="Song C."/>
            <person name="Cheng K."/>
            <person name="Dong M."/>
            <person name="Wang F."/>
            <person name="Huang J."/>
            <person name="Sun D."/>
            <person name="Wang L."/>
            <person name="Ye M."/>
            <person name="Zou H."/>
        </authorList>
    </citation>
    <scope>IDENTIFICATION BY MASS SPECTROMETRY [LARGE SCALE ANALYSIS]</scope>
    <source>
        <tissue>Liver</tissue>
    </source>
</reference>
<reference key="28">
    <citation type="journal article" date="2015" name="Nature">
        <title>eIF3 targets cell-proliferation messenger RNAs for translational activation or repression.</title>
        <authorList>
            <person name="Lee A.S."/>
            <person name="Kranzusch P.J."/>
            <person name="Cate J.H."/>
        </authorList>
    </citation>
    <scope>FUNCTION</scope>
    <scope>IDENTIFICATION IN THE EIF-3 COMPLEX</scope>
</reference>
<reference key="29">
    <citation type="journal article" date="2015" name="Proteomics">
        <title>N-terminome analysis of the human mitochondrial proteome.</title>
        <authorList>
            <person name="Vaca Jacome A.S."/>
            <person name="Rabilloud T."/>
            <person name="Schaeffer-Reiss C."/>
            <person name="Rompais M."/>
            <person name="Ayoub D."/>
            <person name="Lane L."/>
            <person name="Bairoch A."/>
            <person name="Van Dorsselaer A."/>
            <person name="Carapito C."/>
        </authorList>
    </citation>
    <scope>IDENTIFICATION BY MASS SPECTROMETRY [LARGE SCALE ANALYSIS]</scope>
</reference>
<reference key="30">
    <citation type="journal article" date="2016" name="Nature">
        <title>eIF3d is an mRNA cap-binding protein that is required for specialized translation initiation.</title>
        <authorList>
            <person name="Lee A.S."/>
            <person name="Kranzusch P.J."/>
            <person name="Doudna J.A."/>
            <person name="Cate J.H."/>
        </authorList>
    </citation>
    <scope>FUNCTION</scope>
</reference>
<reference key="31">
    <citation type="journal article" date="2006" name="Science">
        <title>The consensus coding sequences of human breast and colorectal cancers.</title>
        <authorList>
            <person name="Sjoeblom T."/>
            <person name="Jones S."/>
            <person name="Wood L.D."/>
            <person name="Parsons D.W."/>
            <person name="Lin J."/>
            <person name="Barber T.D."/>
            <person name="Mandelker D."/>
            <person name="Leary R.J."/>
            <person name="Ptak J."/>
            <person name="Silliman N."/>
            <person name="Szabo S."/>
            <person name="Buckhaults P."/>
            <person name="Farrell C."/>
            <person name="Meeh P."/>
            <person name="Markowitz S.D."/>
            <person name="Willis J."/>
            <person name="Dawson D."/>
            <person name="Willson J.K.V."/>
            <person name="Gazdar A.F."/>
            <person name="Hartigan J."/>
            <person name="Wu L."/>
            <person name="Liu C."/>
            <person name="Parmigiani G."/>
            <person name="Park B.H."/>
            <person name="Bachman K.E."/>
            <person name="Papadopoulos N."/>
            <person name="Vogelstein B."/>
            <person name="Kinzler K.W."/>
            <person name="Velculescu V.E."/>
        </authorList>
    </citation>
    <scope>VARIANT [LARGE SCALE ANALYSIS] GLY-80</scope>
</reference>
<accession>Q7L2H7</accession>
<accession>A8K7X4</accession>
<accession>B4E2Q4</accession>
<accession>O60735</accession>
<accession>Q2F836</accession>
<accession>Q53HL6</accession>
<accession>Q9BXW1</accession>
<comment type="function">
    <text evidence="1 9 12 13">Component of the eukaryotic translation initiation factor 3 (eIF-3) complex, which is required for several steps in the initiation of protein synthesis (PubMed:17403899, PubMed:25849773, PubMed:27462815). The eIF-3 complex associates with the 40S ribosome and facilitates the recruitment of eIF-1, eIF-1A, eIF-2:GTP:methionyl-tRNAi and eIF-5 to form the 43S pre-initiation complex (43S PIC). The eIF-3 complex stimulates mRNA recruitment to the 43S PIC and scanning of the mRNA for AUG recognition. The eIF-3 complex is also required for disassembly and recycling of post-termination ribosomal complexes and subsequently prevents premature joining of the 40S and 60S ribosomal subunits prior to initiation (PubMed:17403899). The eIF-3 complex specifically targets and initiates translation of a subset of mRNAs involved in cell proliferation, including cell cycling, differentiation and apoptosis, and uses different modes of RNA stem-loop binding to exert either translational activation or repression (PubMed:25849773).</text>
</comment>
<comment type="function">
    <text evidence="4">(Microbial infection) May favor virus entry in case of infection with herpes simplex virus 1 (HSV1) or herpes simplex virus 2 (HSV2).</text>
</comment>
<comment type="subunit">
    <text evidence="1 3 6 8 9 11">Component of the eukaryotic translation initiation factor 3 (eIF-3) complex, which is composed of 13 subunits: EIF3A, EIF3B, EIF3C, EIF3D, EIF3E, EIF3F, EIF3G, EIF3H, EIF3I, EIF3J, EIF3K, EIF3L and EIF3M. The eIF-3 complex appears to include 3 stable modules: module A is composed of EIF3A, EIF3B, EIF3G and EIF3I; module B is composed of EIF3F, EIF3H, and EIF3M; and module C is composed of EIF3C, EIF3D, EIF3E, EIF3K and EIF3L. EIF3C of module C binds EIF3B of module A and EIF3H of module B, thereby linking the three modules. EIF3J is a labile subunit that binds to the eIF-3 complex via EIF3B. The eIF-3 complex interacts with RPS6KB1 under conditions of nutrient depletion. Mitogenic stimulation leads to binding and activation of a complex composed of MTOR and RPTOR, leading to phosphorylation and release of RPS6KB1 and binding of EIF4B to eIF-3.</text>
</comment>
<comment type="interaction">
    <interactant intactId="EBI-353901">
        <id>Q7L2H7</id>
    </interactant>
    <interactant intactId="EBI-742038">
        <id>Q9P2A4</id>
        <label>ABI3</label>
    </interactant>
    <organismsDiffer>false</organismsDiffer>
    <experiments>3</experiments>
</comment>
<comment type="interaction">
    <interactant intactId="EBI-353901">
        <id>Q7L2H7</id>
    </interactant>
    <interactant intactId="EBI-366696">
        <id>P55884</id>
        <label>EIF3B</label>
    </interactant>
    <organismsDiffer>false</organismsDiffer>
    <experiments>7</experiments>
</comment>
<comment type="interaction">
    <interactant intactId="EBI-353901">
        <id>Q7L2H7</id>
    </interactant>
    <interactant intactId="EBI-711990">
        <id>O00303</id>
        <label>EIF3F</label>
    </interactant>
    <organismsDiffer>false</organismsDiffer>
    <experiments>21</experiments>
</comment>
<comment type="interaction">
    <interactant intactId="EBI-353901">
        <id>Q7L2H7</id>
    </interactant>
    <interactant intactId="EBI-709735">
        <id>O15372</id>
        <label>EIF3H</label>
    </interactant>
    <organismsDiffer>false</organismsDiffer>
    <experiments>8</experiments>
</comment>
<comment type="interaction">
    <interactant intactId="EBI-353901">
        <id>Q7L2H7</id>
    </interactant>
    <interactant intactId="EBI-13328621">
        <id>Q7RTV2</id>
        <label>GSTA5</label>
    </interactant>
    <organismsDiffer>false</organismsDiffer>
    <experiments>2</experiments>
</comment>
<comment type="interaction">
    <interactant intactId="EBI-353901">
        <id>Q7L2H7</id>
    </interactant>
    <interactant intactId="EBI-11059915">
        <id>Q8N7C3</id>
        <label>TRIML2</label>
    </interactant>
    <organismsDiffer>false</organismsDiffer>
    <experiments>3</experiments>
</comment>
<comment type="interaction">
    <interactant intactId="EBI-353901">
        <id>Q7L2H7</id>
    </interactant>
    <interactant intactId="EBI-747061">
        <id>O75800</id>
        <label>ZMYND10</label>
    </interactant>
    <organismsDiffer>false</organismsDiffer>
    <experiments>3</experiments>
</comment>
<comment type="interaction">
    <interactant intactId="EBI-353901">
        <id>Q7L2H7</id>
    </interactant>
    <interactant intactId="EBI-17789949">
        <id>Q6ZMS7-2</id>
        <label>ZNF783</label>
    </interactant>
    <organismsDiffer>false</organismsDiffer>
    <experiments>3</experiments>
</comment>
<comment type="interaction">
    <interactant intactId="EBI-353901">
        <id>Q7L2H7</id>
    </interactant>
    <interactant intactId="EBI-6248094">
        <id>Q9Q2G4</id>
        <label>ORF</label>
    </interactant>
    <organismsDiffer>true</organismsDiffer>
    <experiments>2</experiments>
</comment>
<comment type="subcellular location">
    <subcellularLocation>
        <location evidence="1">Cytoplasm</location>
    </subcellularLocation>
</comment>
<comment type="alternative products">
    <event type="alternative splicing"/>
    <isoform>
        <id>Q7L2H7-1</id>
        <name>1</name>
        <sequence type="displayed"/>
    </isoform>
    <isoform>
        <id>Q7L2H7-2</id>
        <name>2</name>
        <sequence type="described" ref="VSP_056911"/>
    </isoform>
</comment>
<comment type="tissue specificity">
    <text evidence="4">Broadly expressed.</text>
</comment>
<comment type="induction">
    <text evidence="10">By glucose deprivation in neuroblastoma cells.</text>
</comment>
<comment type="mass spectrometry" mass="42413.8" method="Unknown" evidence="8"/>
<comment type="mass spectrometry" mass="42414.7" error="0.2" method="MALDI" evidence="11"/>
<comment type="similarity">
    <text evidence="1">Belongs to the eIF-3 subunit M family.</text>
</comment>
<comment type="sequence caution" evidence="17">
    <conflict type="erroneous initiation">
        <sequence resource="EMBL-CDS" id="AAK07542"/>
    </conflict>
    <text>Truncated N-terminus.</text>
</comment>
<comment type="sequence caution" evidence="17">
    <conflict type="frameshift">
        <sequence resource="EMBL-CDS" id="AAK07542"/>
    </conflict>
</comment>